<reference key="1">
    <citation type="journal article" date="2005" name="Proc. Natl. Acad. Sci. U.S.A.">
        <title>The genome of Salinibacter ruber: convergence and gene exchange among hyperhalophilic bacteria and archaea.</title>
        <authorList>
            <person name="Mongodin E.F."/>
            <person name="Nelson K.E."/>
            <person name="Daugherty S."/>
            <person name="DeBoy R.T."/>
            <person name="Wister J."/>
            <person name="Khouri H."/>
            <person name="Weidman J."/>
            <person name="Walsh D.A."/>
            <person name="Papke R.T."/>
            <person name="Sanchez Perez G."/>
            <person name="Sharma A.K."/>
            <person name="Nesbo C.L."/>
            <person name="MacLeod D."/>
            <person name="Bapteste E."/>
            <person name="Doolittle W.F."/>
            <person name="Charlebois R.L."/>
            <person name="Legault B."/>
            <person name="Rodriguez-Valera F."/>
        </authorList>
    </citation>
    <scope>NUCLEOTIDE SEQUENCE [LARGE SCALE GENOMIC DNA]</scope>
    <source>
        <strain>DSM 13855 / CECT 5946 / M31</strain>
    </source>
</reference>
<accession>Q2S238</accession>
<comment type="function">
    <text evidence="1">Catalyzes the attachment of tyrosine to tRNA(Tyr) in a two-step reaction: tyrosine is first activated by ATP to form Tyr-AMP and then transferred to the acceptor end of tRNA(Tyr).</text>
</comment>
<comment type="catalytic activity">
    <reaction evidence="1">
        <text>tRNA(Tyr) + L-tyrosine + ATP = L-tyrosyl-tRNA(Tyr) + AMP + diphosphate + H(+)</text>
        <dbReference type="Rhea" id="RHEA:10220"/>
        <dbReference type="Rhea" id="RHEA-COMP:9706"/>
        <dbReference type="Rhea" id="RHEA-COMP:9707"/>
        <dbReference type="ChEBI" id="CHEBI:15378"/>
        <dbReference type="ChEBI" id="CHEBI:30616"/>
        <dbReference type="ChEBI" id="CHEBI:33019"/>
        <dbReference type="ChEBI" id="CHEBI:58315"/>
        <dbReference type="ChEBI" id="CHEBI:78442"/>
        <dbReference type="ChEBI" id="CHEBI:78536"/>
        <dbReference type="ChEBI" id="CHEBI:456215"/>
        <dbReference type="EC" id="6.1.1.1"/>
    </reaction>
</comment>
<comment type="subunit">
    <text evidence="1">Homodimer.</text>
</comment>
<comment type="subcellular location">
    <subcellularLocation>
        <location evidence="1">Cytoplasm</location>
    </subcellularLocation>
</comment>
<comment type="similarity">
    <text evidence="1">Belongs to the class-I aminoacyl-tRNA synthetase family. TyrS type 2 subfamily.</text>
</comment>
<name>SYY_SALRD</name>
<protein>
    <recommendedName>
        <fullName evidence="1">Tyrosine--tRNA ligase</fullName>
        <ecNumber evidence="1">6.1.1.1</ecNumber>
    </recommendedName>
    <alternativeName>
        <fullName evidence="1">Tyrosyl-tRNA synthetase</fullName>
        <shortName evidence="1">TyrRS</shortName>
    </alternativeName>
</protein>
<dbReference type="EC" id="6.1.1.1" evidence="1"/>
<dbReference type="EMBL" id="CP000159">
    <property type="protein sequence ID" value="ABC44550.1"/>
    <property type="molecule type" value="Genomic_DNA"/>
</dbReference>
<dbReference type="RefSeq" id="WP_011404369.1">
    <property type="nucleotide sequence ID" value="NC_007677.1"/>
</dbReference>
<dbReference type="RefSeq" id="YP_445743.1">
    <property type="nucleotide sequence ID" value="NC_007677.1"/>
</dbReference>
<dbReference type="SMR" id="Q2S238"/>
<dbReference type="STRING" id="309807.SRU_1623"/>
<dbReference type="EnsemblBacteria" id="ABC44550">
    <property type="protein sequence ID" value="ABC44550"/>
    <property type="gene ID" value="SRU_1623"/>
</dbReference>
<dbReference type="GeneID" id="83728541"/>
<dbReference type="KEGG" id="sru:SRU_1623"/>
<dbReference type="PATRIC" id="fig|309807.25.peg.1684"/>
<dbReference type="eggNOG" id="COG0162">
    <property type="taxonomic scope" value="Bacteria"/>
</dbReference>
<dbReference type="HOGENOM" id="CLU_024003_5_0_10"/>
<dbReference type="OrthoDB" id="9804243at2"/>
<dbReference type="Proteomes" id="UP000008674">
    <property type="component" value="Chromosome"/>
</dbReference>
<dbReference type="GO" id="GO:0005829">
    <property type="term" value="C:cytosol"/>
    <property type="evidence" value="ECO:0007669"/>
    <property type="project" value="TreeGrafter"/>
</dbReference>
<dbReference type="GO" id="GO:0005524">
    <property type="term" value="F:ATP binding"/>
    <property type="evidence" value="ECO:0007669"/>
    <property type="project" value="UniProtKB-UniRule"/>
</dbReference>
<dbReference type="GO" id="GO:0003723">
    <property type="term" value="F:RNA binding"/>
    <property type="evidence" value="ECO:0007669"/>
    <property type="project" value="UniProtKB-KW"/>
</dbReference>
<dbReference type="GO" id="GO:0004831">
    <property type="term" value="F:tyrosine-tRNA ligase activity"/>
    <property type="evidence" value="ECO:0007669"/>
    <property type="project" value="UniProtKB-UniRule"/>
</dbReference>
<dbReference type="GO" id="GO:0006437">
    <property type="term" value="P:tyrosyl-tRNA aminoacylation"/>
    <property type="evidence" value="ECO:0007669"/>
    <property type="project" value="UniProtKB-UniRule"/>
</dbReference>
<dbReference type="CDD" id="cd00165">
    <property type="entry name" value="S4"/>
    <property type="match status" value="1"/>
</dbReference>
<dbReference type="CDD" id="cd00805">
    <property type="entry name" value="TyrRS_core"/>
    <property type="match status" value="1"/>
</dbReference>
<dbReference type="FunFam" id="3.40.50.620:FF:000061">
    <property type="entry name" value="Tyrosine--tRNA ligase"/>
    <property type="match status" value="1"/>
</dbReference>
<dbReference type="Gene3D" id="3.40.50.620">
    <property type="entry name" value="HUPs"/>
    <property type="match status" value="1"/>
</dbReference>
<dbReference type="Gene3D" id="3.10.290.10">
    <property type="entry name" value="RNA-binding S4 domain"/>
    <property type="match status" value="1"/>
</dbReference>
<dbReference type="Gene3D" id="1.10.240.10">
    <property type="entry name" value="Tyrosyl-Transfer RNA Synthetase"/>
    <property type="match status" value="1"/>
</dbReference>
<dbReference type="HAMAP" id="MF_02007">
    <property type="entry name" value="Tyr_tRNA_synth_type2"/>
    <property type="match status" value="1"/>
</dbReference>
<dbReference type="InterPro" id="IPR002305">
    <property type="entry name" value="aa-tRNA-synth_Ic"/>
</dbReference>
<dbReference type="InterPro" id="IPR014729">
    <property type="entry name" value="Rossmann-like_a/b/a_fold"/>
</dbReference>
<dbReference type="InterPro" id="IPR036986">
    <property type="entry name" value="S4_RNA-bd_sf"/>
</dbReference>
<dbReference type="InterPro" id="IPR002307">
    <property type="entry name" value="Tyr-tRNA-ligase"/>
</dbReference>
<dbReference type="InterPro" id="IPR024088">
    <property type="entry name" value="Tyr-tRNA-ligase_bac-type"/>
</dbReference>
<dbReference type="InterPro" id="IPR024108">
    <property type="entry name" value="Tyr-tRNA-ligase_bac_2"/>
</dbReference>
<dbReference type="NCBIfam" id="TIGR00234">
    <property type="entry name" value="tyrS"/>
    <property type="match status" value="1"/>
</dbReference>
<dbReference type="PANTHER" id="PTHR11766:SF1">
    <property type="entry name" value="TYROSINE--TRNA LIGASE"/>
    <property type="match status" value="1"/>
</dbReference>
<dbReference type="PANTHER" id="PTHR11766">
    <property type="entry name" value="TYROSYL-TRNA SYNTHETASE"/>
    <property type="match status" value="1"/>
</dbReference>
<dbReference type="Pfam" id="PF00579">
    <property type="entry name" value="tRNA-synt_1b"/>
    <property type="match status" value="1"/>
</dbReference>
<dbReference type="PRINTS" id="PR01040">
    <property type="entry name" value="TRNASYNTHTYR"/>
</dbReference>
<dbReference type="SUPFAM" id="SSF55174">
    <property type="entry name" value="Alpha-L RNA-binding motif"/>
    <property type="match status" value="1"/>
</dbReference>
<dbReference type="SUPFAM" id="SSF52374">
    <property type="entry name" value="Nucleotidylyl transferase"/>
    <property type="match status" value="1"/>
</dbReference>
<dbReference type="PROSITE" id="PS50889">
    <property type="entry name" value="S4"/>
    <property type="match status" value="1"/>
</dbReference>
<sequence length="412" mass="46453">MAFPPVDEQMTVLRRGAEEIVPEDELAEKLRTSRETDTPLTVKLGCDPSRPDLHLGHTVVLRKLRQFQDFGHRAVLIVGDFTGMIGDPSGRSKTRPQLTLEETREHGQSYYEQATRVLDPNKTEIRYNSEWLDEMRFSDVIELAAQQTVAQMLKRDDFNERYEAGQPISLHEFLYPLAQARDSVHIEADVELGGTDQRFNLLLARRLQEANDQAAQVCMMLPLLEGTDGSDKMSKSLDNAIGIAEAPEDMYGKTMSVPDDLIYRYVELVTDIPTEQLPKVKQFAESNPRAAKAQLARRIVEMYHGEEAADRAEEHFEQTVVEGGVPDDLPEYTPTPEDGAEVGLLNLMRHADLTDSNSEGRRMIEQGAVTIDEEKVTDTGRYIDVAEEAPFVLQVGKRRFARIRPPENGTDV</sequence>
<organism>
    <name type="scientific">Salinibacter ruber (strain DSM 13855 / M31)</name>
    <dbReference type="NCBI Taxonomy" id="309807"/>
    <lineage>
        <taxon>Bacteria</taxon>
        <taxon>Pseudomonadati</taxon>
        <taxon>Rhodothermota</taxon>
        <taxon>Rhodothermia</taxon>
        <taxon>Rhodothermales</taxon>
        <taxon>Salinibacteraceae</taxon>
        <taxon>Salinibacter</taxon>
    </lineage>
</organism>
<proteinExistence type="inferred from homology"/>
<gene>
    <name evidence="1" type="primary">tyrS</name>
    <name type="ordered locus">SRU_1623</name>
</gene>
<evidence type="ECO:0000255" key="1">
    <source>
        <dbReference type="HAMAP-Rule" id="MF_02007"/>
    </source>
</evidence>
<keyword id="KW-0030">Aminoacyl-tRNA synthetase</keyword>
<keyword id="KW-0067">ATP-binding</keyword>
<keyword id="KW-0963">Cytoplasm</keyword>
<keyword id="KW-0436">Ligase</keyword>
<keyword id="KW-0547">Nucleotide-binding</keyword>
<keyword id="KW-0648">Protein biosynthesis</keyword>
<keyword id="KW-1185">Reference proteome</keyword>
<keyword id="KW-0694">RNA-binding</keyword>
<feature type="chain" id="PRO_0000236760" description="Tyrosine--tRNA ligase">
    <location>
        <begin position="1"/>
        <end position="412"/>
    </location>
</feature>
<feature type="domain" description="S4 RNA-binding" evidence="1">
    <location>
        <begin position="342"/>
        <end position="405"/>
    </location>
</feature>
<feature type="short sequence motif" description="'HIGH' region">
    <location>
        <begin position="48"/>
        <end position="57"/>
    </location>
</feature>
<feature type="short sequence motif" description="'KMSKS' region">
    <location>
        <begin position="232"/>
        <end position="236"/>
    </location>
</feature>
<feature type="binding site" evidence="1">
    <location>
        <position position="235"/>
    </location>
    <ligand>
        <name>ATP</name>
        <dbReference type="ChEBI" id="CHEBI:30616"/>
    </ligand>
</feature>